<sequence>MDPISFKYIAIAFMAFGMAGAALGVASIFNALMNSIARNPSAIEDLQKAALIGAGLAEAMGLFSFILAILLMFT</sequence>
<keyword id="KW-0066">ATP synthesis</keyword>
<keyword id="KW-0997">Cell inner membrane</keyword>
<keyword id="KW-1003">Cell membrane</keyword>
<keyword id="KW-0138">CF(0)</keyword>
<keyword id="KW-0375">Hydrogen ion transport</keyword>
<keyword id="KW-0406">Ion transport</keyword>
<keyword id="KW-0446">Lipid-binding</keyword>
<keyword id="KW-0472">Membrane</keyword>
<keyword id="KW-0812">Transmembrane</keyword>
<keyword id="KW-1133">Transmembrane helix</keyword>
<keyword id="KW-0813">Transport</keyword>
<comment type="function">
    <text evidence="1">F(1)F(0) ATP synthase produces ATP from ADP in the presence of a proton or sodium gradient. F-type ATPases consist of two structural domains, F(1) containing the extramembraneous catalytic core and F(0) containing the membrane proton channel, linked together by a central stalk and a peripheral stalk. During catalysis, ATP synthesis in the catalytic domain of F(1) is coupled via a rotary mechanism of the central stalk subunits to proton translocation.</text>
</comment>
<comment type="function">
    <text evidence="1">Key component of the F(0) channel; it plays a direct role in translocation across the membrane. A homomeric c-ring of between 10-14 subunits forms the central stalk rotor element with the F(1) delta and epsilon subunits.</text>
</comment>
<comment type="subunit">
    <text evidence="1">F-type ATPases have 2 components, F(1) - the catalytic core - and F(0) - the membrane proton channel. F(1) has five subunits: alpha(3), beta(3), gamma(1), delta(1), epsilon(1). F(0) has three main subunits: a(1), b(2) and c(10-14). The alpha and beta chains form an alternating ring which encloses part of the gamma chain. F(1) is attached to F(0) by a central stalk formed by the gamma and epsilon chains, while a peripheral stalk is formed by the delta and b chains.</text>
</comment>
<comment type="subcellular location">
    <subcellularLocation>
        <location evidence="1">Cell inner membrane</location>
        <topology evidence="1">Multi-pass membrane protein</topology>
    </subcellularLocation>
</comment>
<comment type="similarity">
    <text evidence="1">Belongs to the ATPase C chain family.</text>
</comment>
<accession>B3CQT8</accession>
<evidence type="ECO:0000255" key="1">
    <source>
        <dbReference type="HAMAP-Rule" id="MF_01396"/>
    </source>
</evidence>
<proteinExistence type="inferred from homology"/>
<name>ATPL_ORITI</name>
<feature type="chain" id="PRO_1000184429" description="ATP synthase subunit c">
    <location>
        <begin position="1"/>
        <end position="74"/>
    </location>
</feature>
<feature type="transmembrane region" description="Helical" evidence="1">
    <location>
        <begin position="9"/>
        <end position="29"/>
    </location>
</feature>
<feature type="transmembrane region" description="Helical" evidence="1">
    <location>
        <begin position="51"/>
        <end position="71"/>
    </location>
</feature>
<feature type="site" description="Reversibly protonated during proton transport" evidence="1">
    <location>
        <position position="58"/>
    </location>
</feature>
<reference key="1">
    <citation type="journal article" date="2008" name="DNA Res.">
        <title>The whole-genome sequencing of the obligate intracellular bacterium Orientia tsutsugamushi revealed massive gene amplification during reductive genome evolution.</title>
        <authorList>
            <person name="Nakayama K."/>
            <person name="Yamashita A."/>
            <person name="Kurokawa K."/>
            <person name="Morimoto T."/>
            <person name="Ogawa M."/>
            <person name="Fukuhara M."/>
            <person name="Urakami H."/>
            <person name="Ohnishi M."/>
            <person name="Uchiyama I."/>
            <person name="Ogura Y."/>
            <person name="Ooka T."/>
            <person name="Oshima K."/>
            <person name="Tamura A."/>
            <person name="Hattori M."/>
            <person name="Hayashi T."/>
        </authorList>
    </citation>
    <scope>NUCLEOTIDE SEQUENCE [LARGE SCALE GENOMIC DNA]</scope>
    <source>
        <strain>Ikeda</strain>
    </source>
</reference>
<dbReference type="EMBL" id="AP008981">
    <property type="protein sequence ID" value="BAG39845.1"/>
    <property type="molecule type" value="Genomic_DNA"/>
</dbReference>
<dbReference type="RefSeq" id="WP_011944645.1">
    <property type="nucleotide sequence ID" value="NC_010793.1"/>
</dbReference>
<dbReference type="SMR" id="B3CQT8"/>
<dbReference type="KEGG" id="ott:OTT_0387"/>
<dbReference type="HOGENOM" id="CLU_148047_4_0_5"/>
<dbReference type="OrthoDB" id="9811093at2"/>
<dbReference type="Proteomes" id="UP000001033">
    <property type="component" value="Chromosome"/>
</dbReference>
<dbReference type="GO" id="GO:0005886">
    <property type="term" value="C:plasma membrane"/>
    <property type="evidence" value="ECO:0007669"/>
    <property type="project" value="UniProtKB-SubCell"/>
</dbReference>
<dbReference type="GO" id="GO:0045259">
    <property type="term" value="C:proton-transporting ATP synthase complex"/>
    <property type="evidence" value="ECO:0007669"/>
    <property type="project" value="UniProtKB-KW"/>
</dbReference>
<dbReference type="GO" id="GO:0033177">
    <property type="term" value="C:proton-transporting two-sector ATPase complex, proton-transporting domain"/>
    <property type="evidence" value="ECO:0007669"/>
    <property type="project" value="InterPro"/>
</dbReference>
<dbReference type="GO" id="GO:0008289">
    <property type="term" value="F:lipid binding"/>
    <property type="evidence" value="ECO:0007669"/>
    <property type="project" value="UniProtKB-KW"/>
</dbReference>
<dbReference type="GO" id="GO:0046933">
    <property type="term" value="F:proton-transporting ATP synthase activity, rotational mechanism"/>
    <property type="evidence" value="ECO:0007669"/>
    <property type="project" value="UniProtKB-UniRule"/>
</dbReference>
<dbReference type="CDD" id="cd18182">
    <property type="entry name" value="ATP-synt_Fo_c_ATP5G3"/>
    <property type="match status" value="1"/>
</dbReference>
<dbReference type="Gene3D" id="1.20.20.10">
    <property type="entry name" value="F1F0 ATP synthase subunit C"/>
    <property type="match status" value="1"/>
</dbReference>
<dbReference type="HAMAP" id="MF_01396">
    <property type="entry name" value="ATP_synth_c_bact"/>
    <property type="match status" value="1"/>
</dbReference>
<dbReference type="InterPro" id="IPR000454">
    <property type="entry name" value="ATP_synth_F0_csu"/>
</dbReference>
<dbReference type="InterPro" id="IPR020537">
    <property type="entry name" value="ATP_synth_F0_csu_DDCD_BS"/>
</dbReference>
<dbReference type="InterPro" id="IPR038662">
    <property type="entry name" value="ATP_synth_F0_csu_sf"/>
</dbReference>
<dbReference type="InterPro" id="IPR002379">
    <property type="entry name" value="ATPase_proteolipid_c-like_dom"/>
</dbReference>
<dbReference type="InterPro" id="IPR035921">
    <property type="entry name" value="F/V-ATP_Csub_sf"/>
</dbReference>
<dbReference type="NCBIfam" id="NF005733">
    <property type="entry name" value="PRK07558.1"/>
    <property type="match status" value="1"/>
</dbReference>
<dbReference type="Pfam" id="PF00137">
    <property type="entry name" value="ATP-synt_C"/>
    <property type="match status" value="1"/>
</dbReference>
<dbReference type="PRINTS" id="PR00124">
    <property type="entry name" value="ATPASEC"/>
</dbReference>
<dbReference type="SUPFAM" id="SSF81333">
    <property type="entry name" value="F1F0 ATP synthase subunit C"/>
    <property type="match status" value="1"/>
</dbReference>
<dbReference type="PROSITE" id="PS00605">
    <property type="entry name" value="ATPASE_C"/>
    <property type="match status" value="1"/>
</dbReference>
<organism>
    <name type="scientific">Orientia tsutsugamushi (strain Ikeda)</name>
    <name type="common">Rickettsia tsutsugamushi</name>
    <dbReference type="NCBI Taxonomy" id="334380"/>
    <lineage>
        <taxon>Bacteria</taxon>
        <taxon>Pseudomonadati</taxon>
        <taxon>Pseudomonadota</taxon>
        <taxon>Alphaproteobacteria</taxon>
        <taxon>Rickettsiales</taxon>
        <taxon>Rickettsiaceae</taxon>
        <taxon>Rickettsieae</taxon>
        <taxon>Orientia</taxon>
    </lineage>
</organism>
<protein>
    <recommendedName>
        <fullName evidence="1">ATP synthase subunit c</fullName>
    </recommendedName>
    <alternativeName>
        <fullName evidence="1">ATP synthase F(0) sector subunit c</fullName>
    </alternativeName>
    <alternativeName>
        <fullName evidence="1">F-type ATPase subunit c</fullName>
        <shortName evidence="1">F-ATPase subunit c</shortName>
    </alternativeName>
    <alternativeName>
        <fullName evidence="1">Lipid-binding protein</fullName>
    </alternativeName>
</protein>
<gene>
    <name evidence="1" type="primary">atpE</name>
    <name type="ordered locus">OTT_0387</name>
</gene>